<feature type="chain" id="PRO_0000407902" description="Ribonuclease VapC9">
    <location>
        <begin position="1"/>
        <end position="135"/>
    </location>
</feature>
<feature type="domain" description="PINc" evidence="1">
    <location>
        <begin position="15"/>
        <end position="118"/>
    </location>
</feature>
<feature type="binding site" evidence="1">
    <location>
        <position position="17"/>
    </location>
    <ligand>
        <name>Mg(2+)</name>
        <dbReference type="ChEBI" id="CHEBI:18420"/>
    </ligand>
</feature>
<feature type="binding site" evidence="1">
    <location>
        <position position="88"/>
    </location>
    <ligand>
        <name>Mg(2+)</name>
        <dbReference type="ChEBI" id="CHEBI:18420"/>
    </ligand>
</feature>
<feature type="strand" evidence="3">
    <location>
        <begin position="12"/>
        <end position="16"/>
    </location>
</feature>
<feature type="helix" evidence="3">
    <location>
        <begin position="18"/>
        <end position="27"/>
    </location>
</feature>
<feature type="helix" evidence="3">
    <location>
        <begin position="31"/>
        <end position="37"/>
    </location>
</feature>
<feature type="strand" evidence="3">
    <location>
        <begin position="40"/>
        <end position="46"/>
    </location>
</feature>
<feature type="helix" evidence="3">
    <location>
        <begin position="47"/>
        <end position="59"/>
    </location>
</feature>
<feature type="helix" evidence="3">
    <location>
        <begin position="62"/>
        <end position="75"/>
    </location>
</feature>
<feature type="strand" evidence="3">
    <location>
        <begin position="78"/>
        <end position="81"/>
    </location>
</feature>
<feature type="helix" evidence="3">
    <location>
        <begin position="88"/>
        <end position="98"/>
    </location>
</feature>
<feature type="strand" evidence="3">
    <location>
        <begin position="101"/>
        <end position="103"/>
    </location>
</feature>
<feature type="helix" evidence="3">
    <location>
        <begin position="107"/>
        <end position="115"/>
    </location>
</feature>
<keyword id="KW-0002">3D-structure</keyword>
<keyword id="KW-0378">Hydrolase</keyword>
<keyword id="KW-0460">Magnesium</keyword>
<keyword id="KW-0479">Metal-binding</keyword>
<keyword id="KW-0540">Nuclease</keyword>
<keyword id="KW-1185">Reference proteome</keyword>
<keyword id="KW-1277">Toxin-antitoxin system</keyword>
<gene>
    <name evidence="1" type="primary">vapC9</name>
    <name type="ordered locus">AF_0591</name>
</gene>
<sequence length="135" mass="15467">MEADRGRNNKVRCAVVDTNVLMYVYLNKADVVGQLREFGFSRFLITASVKRELEKLEMSLRGKEKVAARFALKLLEHFEVVETESEGDPSLIEAAEKYGCILITNDKELKRKAKQRGIPVGYLKEDKRVFVELLD</sequence>
<protein>
    <recommendedName>
        <fullName evidence="1">Ribonuclease VapC9</fullName>
        <shortName evidence="1">RNase VapC9</shortName>
        <ecNumber evidence="1">3.1.-.-</ecNumber>
    </recommendedName>
    <alternativeName>
        <fullName evidence="1">Putative toxin VapC9</fullName>
    </alternativeName>
</protein>
<organism>
    <name type="scientific">Archaeoglobus fulgidus (strain ATCC 49558 / DSM 4304 / JCM 9628 / NBRC 100126 / VC-16)</name>
    <dbReference type="NCBI Taxonomy" id="224325"/>
    <lineage>
        <taxon>Archaea</taxon>
        <taxon>Methanobacteriati</taxon>
        <taxon>Methanobacteriota</taxon>
        <taxon>Archaeoglobi</taxon>
        <taxon>Archaeoglobales</taxon>
        <taxon>Archaeoglobaceae</taxon>
        <taxon>Archaeoglobus</taxon>
    </lineage>
</organism>
<proteinExistence type="evidence at protein level"/>
<evidence type="ECO:0000255" key="1">
    <source>
        <dbReference type="HAMAP-Rule" id="MF_00265"/>
    </source>
</evidence>
<evidence type="ECO:0000305" key="2"/>
<evidence type="ECO:0007829" key="3">
    <source>
        <dbReference type="PDB" id="1O4W"/>
    </source>
</evidence>
<comment type="function">
    <text evidence="1">Toxic component of a type II toxin-antitoxin (TA) system. An RNase.</text>
</comment>
<comment type="cofactor">
    <cofactor evidence="1">
        <name>Mg(2+)</name>
        <dbReference type="ChEBI" id="CHEBI:18420"/>
    </cofactor>
</comment>
<comment type="subunit">
    <text evidence="2">Dimer.</text>
</comment>
<comment type="similarity">
    <text evidence="1">Belongs to the PINc/VapC protein family.</text>
</comment>
<reference key="1">
    <citation type="journal article" date="1997" name="Nature">
        <title>The complete genome sequence of the hyperthermophilic, sulphate-reducing archaeon Archaeoglobus fulgidus.</title>
        <authorList>
            <person name="Klenk H.-P."/>
            <person name="Clayton R.A."/>
            <person name="Tomb J.-F."/>
            <person name="White O."/>
            <person name="Nelson K.E."/>
            <person name="Ketchum K.A."/>
            <person name="Dodson R.J."/>
            <person name="Gwinn M.L."/>
            <person name="Hickey E.K."/>
            <person name="Peterson J.D."/>
            <person name="Richardson D.L."/>
            <person name="Kerlavage A.R."/>
            <person name="Graham D.E."/>
            <person name="Kyrpides N.C."/>
            <person name="Fleischmann R.D."/>
            <person name="Quackenbush J."/>
            <person name="Lee N.H."/>
            <person name="Sutton G.G."/>
            <person name="Gill S.R."/>
            <person name="Kirkness E.F."/>
            <person name="Dougherty B.A."/>
            <person name="McKenney K."/>
            <person name="Adams M.D."/>
            <person name="Loftus B.J."/>
            <person name="Peterson S.N."/>
            <person name="Reich C.I."/>
            <person name="McNeil L.K."/>
            <person name="Badger J.H."/>
            <person name="Glodek A."/>
            <person name="Zhou L."/>
            <person name="Overbeek R."/>
            <person name="Gocayne J.D."/>
            <person name="Weidman J.F."/>
            <person name="McDonald L.A."/>
            <person name="Utterback T.R."/>
            <person name="Cotton M.D."/>
            <person name="Spriggs T."/>
            <person name="Artiach P."/>
            <person name="Kaine B.P."/>
            <person name="Sykes S.M."/>
            <person name="Sadow P.W."/>
            <person name="D'Andrea K.P."/>
            <person name="Bowman C."/>
            <person name="Fujii C."/>
            <person name="Garland S.A."/>
            <person name="Mason T.M."/>
            <person name="Olsen G.J."/>
            <person name="Fraser C.M."/>
            <person name="Smith H.O."/>
            <person name="Woese C.R."/>
            <person name="Venter J.C."/>
        </authorList>
    </citation>
    <scope>NUCLEOTIDE SEQUENCE [LARGE SCALE GENOMIC DNA]</scope>
    <source>
        <strain>ATCC 49558 / DSM 4304 / JCM 9628 / NBRC 100126 / VC-16</strain>
    </source>
</reference>
<reference key="2">
    <citation type="journal article" date="2005" name="Nucleic Acids Res.">
        <title>Toxin-antitoxin loci are highly abundant in free-living but lost from host-associated prokaryotes.</title>
        <authorList>
            <person name="Pandey D.P."/>
            <person name="Gerdes K."/>
        </authorList>
    </citation>
    <scope>POSSIBLE FUNCTION</scope>
    <source>
        <strain>ATCC 49558 / DSM 4304 / JCM 9628 / NBRC 100126 / VC-16</strain>
    </source>
</reference>
<reference key="3">
    <citation type="journal article" date="2004" name="Proteins">
        <title>Crystal structure of a PIN (PilT N-terminus) domain (AF0591) from Archaeoglobus fulgidus at 1.90 A resolution.</title>
        <authorList>
            <person name="Levin I."/>
            <person name="Schwarzenbacher R."/>
            <person name="Page R."/>
            <person name="Abdubek P."/>
            <person name="Ambing E."/>
            <person name="Biorac T."/>
            <person name="Brinen L.S."/>
            <person name="Campbell J."/>
            <person name="Canaves J.M."/>
            <person name="Chiu H.J."/>
            <person name="Dai X."/>
            <person name="Deacon A.M."/>
            <person name="DiDonato M."/>
            <person name="Elsliger M.A."/>
            <person name="Floyd R."/>
            <person name="Godzik A."/>
            <person name="Grittini C."/>
            <person name="Grzechnik S.K."/>
            <person name="Hampton E."/>
            <person name="Jaroszewski L."/>
            <person name="Karlak C."/>
            <person name="Klock H.E."/>
            <person name="Koesema E."/>
            <person name="Kovarik J.S."/>
            <person name="Kreusch A."/>
            <person name="Kuhn P."/>
            <person name="Lesley S.A."/>
            <person name="McMullan D."/>
            <person name="McPhillips T.M."/>
            <person name="Miller M.D."/>
            <person name="Morse A."/>
            <person name="Moy K."/>
            <person name="Ouyang J."/>
            <person name="Quijano K."/>
            <person name="Reyes R."/>
            <person name="Rezezadeh F."/>
            <person name="Robb A."/>
            <person name="Sims E."/>
            <person name="Spraggon G."/>
            <person name="Stevens R.C."/>
            <person name="van den Bedem H."/>
            <person name="Velasquez J."/>
            <person name="Vincent J."/>
            <person name="von Delft F."/>
            <person name="Wang X."/>
            <person name="West B."/>
            <person name="Wolf G."/>
            <person name="Xu Q."/>
            <person name="Hodgson K.O."/>
            <person name="Wooley J."/>
            <person name="Wilson I.A."/>
        </authorList>
    </citation>
    <scope>X-RAY CRYSTALLOGRAPHY (1.90 ANGSTROMS)</scope>
    <scope>SUBUNIT</scope>
    <source>
        <strain>ATCC 49558 / DSM 4304 / JCM 9628 / NBRC 100126 / VC-16</strain>
    </source>
</reference>
<dbReference type="EC" id="3.1.-.-" evidence="1"/>
<dbReference type="EMBL" id="AE000782">
    <property type="protein sequence ID" value="AAB90656.1"/>
    <property type="molecule type" value="Genomic_DNA"/>
</dbReference>
<dbReference type="PIR" id="G69323">
    <property type="entry name" value="G69323"/>
</dbReference>
<dbReference type="RefSeq" id="WP_010878095.1">
    <property type="nucleotide sequence ID" value="NC_000917.1"/>
</dbReference>
<dbReference type="PDB" id="1O4W">
    <property type="method" value="X-ray"/>
    <property type="resolution" value="1.90 A"/>
    <property type="chains" value="A=1-135"/>
</dbReference>
<dbReference type="PDBsum" id="1O4W"/>
<dbReference type="SMR" id="O29664"/>
<dbReference type="STRING" id="224325.AF_0591"/>
<dbReference type="PaxDb" id="224325-AF_0591"/>
<dbReference type="EnsemblBacteria" id="AAB90656">
    <property type="protein sequence ID" value="AAB90656"/>
    <property type="gene ID" value="AF_0591"/>
</dbReference>
<dbReference type="GeneID" id="24794191"/>
<dbReference type="KEGG" id="afu:AF_0591"/>
<dbReference type="eggNOG" id="arCOG04312">
    <property type="taxonomic scope" value="Archaea"/>
</dbReference>
<dbReference type="HOGENOM" id="CLU_107892_1_0_2"/>
<dbReference type="OrthoDB" id="15280at2157"/>
<dbReference type="PhylomeDB" id="O29664"/>
<dbReference type="EvolutionaryTrace" id="O29664"/>
<dbReference type="Proteomes" id="UP000002199">
    <property type="component" value="Chromosome"/>
</dbReference>
<dbReference type="GO" id="GO:0000287">
    <property type="term" value="F:magnesium ion binding"/>
    <property type="evidence" value="ECO:0007669"/>
    <property type="project" value="UniProtKB-UniRule"/>
</dbReference>
<dbReference type="GO" id="GO:0004540">
    <property type="term" value="F:RNA nuclease activity"/>
    <property type="evidence" value="ECO:0007669"/>
    <property type="project" value="InterPro"/>
</dbReference>
<dbReference type="CDD" id="cd09879">
    <property type="entry name" value="PIN_VapC_AF0591-like"/>
    <property type="match status" value="1"/>
</dbReference>
<dbReference type="Gene3D" id="3.40.50.1010">
    <property type="entry name" value="5'-nuclease"/>
    <property type="match status" value="1"/>
</dbReference>
<dbReference type="HAMAP" id="MF_00265">
    <property type="entry name" value="VapC_Nob1"/>
    <property type="match status" value="1"/>
</dbReference>
<dbReference type="InterPro" id="IPR029060">
    <property type="entry name" value="PIN-like_dom_sf"/>
</dbReference>
<dbReference type="InterPro" id="IPR041120">
    <property type="entry name" value="PIN_9"/>
</dbReference>
<dbReference type="InterPro" id="IPR002716">
    <property type="entry name" value="PIN_dom"/>
</dbReference>
<dbReference type="InterPro" id="IPR022907">
    <property type="entry name" value="VapC_family"/>
</dbReference>
<dbReference type="Pfam" id="PF18477">
    <property type="entry name" value="PIN_9"/>
    <property type="match status" value="1"/>
</dbReference>
<dbReference type="SMART" id="SM00670">
    <property type="entry name" value="PINc"/>
    <property type="match status" value="1"/>
</dbReference>
<dbReference type="SUPFAM" id="SSF88723">
    <property type="entry name" value="PIN domain-like"/>
    <property type="match status" value="1"/>
</dbReference>
<accession>O29664</accession>
<name>VAPC9_ARCFU</name>